<evidence type="ECO:0000255" key="1">
    <source>
        <dbReference type="HAMAP-Rule" id="MF_00159"/>
    </source>
</evidence>
<sequence>MHKESPIIRRKSTRIYVGNVPIGDGAPIAVQSMTNTRTTDVEATVNQIKSLERVGVDIVRVSVPTMDAAEAFKLIKQQVKVPLVADIHFDYRIALKVAEYGVDCLRINPGNIGNEERIRQVVDCARDRNIPIRIGVNGGSLEKDIQEKYGEPTPEALVESAMRHVDILDKLNFDQFKVSVKASDVFLAVDSYRLLAKKIDQPLHLGITEAGGARAGSVKSAIGLGILLSEGIGDTLRISLAADPVEEVKVGFDILKSLRIRSRGINFIACPTCSRQEFDVIGTVNELEQRLEDIITPMDVSIIGCVVNGPGEAEVSTLGVTGAKTRSGFYEDGVRQKERLDNSNMIDLLEAKIRTKAAMLDGNLRININQLDK</sequence>
<keyword id="KW-0004">4Fe-4S</keyword>
<keyword id="KW-0408">Iron</keyword>
<keyword id="KW-0411">Iron-sulfur</keyword>
<keyword id="KW-0414">Isoprene biosynthesis</keyword>
<keyword id="KW-0479">Metal-binding</keyword>
<keyword id="KW-0560">Oxidoreductase</keyword>
<keyword id="KW-1185">Reference proteome</keyword>
<name>ISPG_PROMH</name>
<feature type="chain" id="PRO_1000097172" description="4-hydroxy-3-methylbut-2-en-1-yl diphosphate synthase (flavodoxin)">
    <location>
        <begin position="1"/>
        <end position="373"/>
    </location>
</feature>
<feature type="binding site" evidence="1">
    <location>
        <position position="270"/>
    </location>
    <ligand>
        <name>[4Fe-4S] cluster</name>
        <dbReference type="ChEBI" id="CHEBI:49883"/>
    </ligand>
</feature>
<feature type="binding site" evidence="1">
    <location>
        <position position="273"/>
    </location>
    <ligand>
        <name>[4Fe-4S] cluster</name>
        <dbReference type="ChEBI" id="CHEBI:49883"/>
    </ligand>
</feature>
<feature type="binding site" evidence="1">
    <location>
        <position position="305"/>
    </location>
    <ligand>
        <name>[4Fe-4S] cluster</name>
        <dbReference type="ChEBI" id="CHEBI:49883"/>
    </ligand>
</feature>
<feature type="binding site" evidence="1">
    <location>
        <position position="312"/>
    </location>
    <ligand>
        <name>[4Fe-4S] cluster</name>
        <dbReference type="ChEBI" id="CHEBI:49883"/>
    </ligand>
</feature>
<proteinExistence type="inferred from homology"/>
<comment type="function">
    <text evidence="1">Converts 2C-methyl-D-erythritol 2,4-cyclodiphosphate (ME-2,4cPP) into 1-hydroxy-2-methyl-2-(E)-butenyl 4-diphosphate.</text>
</comment>
<comment type="catalytic activity">
    <reaction evidence="1">
        <text>(2E)-4-hydroxy-3-methylbut-2-enyl diphosphate + oxidized [flavodoxin] + H2O + 2 H(+) = 2-C-methyl-D-erythritol 2,4-cyclic diphosphate + reduced [flavodoxin]</text>
        <dbReference type="Rhea" id="RHEA:43604"/>
        <dbReference type="Rhea" id="RHEA-COMP:10622"/>
        <dbReference type="Rhea" id="RHEA-COMP:10623"/>
        <dbReference type="ChEBI" id="CHEBI:15377"/>
        <dbReference type="ChEBI" id="CHEBI:15378"/>
        <dbReference type="ChEBI" id="CHEBI:57618"/>
        <dbReference type="ChEBI" id="CHEBI:58210"/>
        <dbReference type="ChEBI" id="CHEBI:58483"/>
        <dbReference type="ChEBI" id="CHEBI:128753"/>
        <dbReference type="EC" id="1.17.7.3"/>
    </reaction>
</comment>
<comment type="cofactor">
    <cofactor evidence="1">
        <name>[4Fe-4S] cluster</name>
        <dbReference type="ChEBI" id="CHEBI:49883"/>
    </cofactor>
    <text evidence="1">Binds 1 [4Fe-4S] cluster.</text>
</comment>
<comment type="pathway">
    <text evidence="1">Isoprenoid biosynthesis; isopentenyl diphosphate biosynthesis via DXP pathway; isopentenyl diphosphate from 1-deoxy-D-xylulose 5-phosphate: step 5/6.</text>
</comment>
<comment type="similarity">
    <text evidence="1">Belongs to the IspG family.</text>
</comment>
<organism>
    <name type="scientific">Proteus mirabilis (strain HI4320)</name>
    <dbReference type="NCBI Taxonomy" id="529507"/>
    <lineage>
        <taxon>Bacteria</taxon>
        <taxon>Pseudomonadati</taxon>
        <taxon>Pseudomonadota</taxon>
        <taxon>Gammaproteobacteria</taxon>
        <taxon>Enterobacterales</taxon>
        <taxon>Morganellaceae</taxon>
        <taxon>Proteus</taxon>
    </lineage>
</organism>
<dbReference type="EC" id="1.17.7.3" evidence="1"/>
<dbReference type="EMBL" id="AM942759">
    <property type="protein sequence ID" value="CAR43825.1"/>
    <property type="molecule type" value="Genomic_DNA"/>
</dbReference>
<dbReference type="RefSeq" id="WP_004243820.1">
    <property type="nucleotide sequence ID" value="NC_010554.1"/>
</dbReference>
<dbReference type="SMR" id="B4EZT3"/>
<dbReference type="EnsemblBacteria" id="CAR43825">
    <property type="protein sequence ID" value="CAR43825"/>
    <property type="gene ID" value="PMI1845"/>
</dbReference>
<dbReference type="GeneID" id="6801345"/>
<dbReference type="KEGG" id="pmr:PMI1845"/>
<dbReference type="eggNOG" id="COG0821">
    <property type="taxonomic scope" value="Bacteria"/>
</dbReference>
<dbReference type="HOGENOM" id="CLU_042258_0_0_6"/>
<dbReference type="UniPathway" id="UPA00056">
    <property type="reaction ID" value="UER00096"/>
</dbReference>
<dbReference type="Proteomes" id="UP000008319">
    <property type="component" value="Chromosome"/>
</dbReference>
<dbReference type="GO" id="GO:0051539">
    <property type="term" value="F:4 iron, 4 sulfur cluster binding"/>
    <property type="evidence" value="ECO:0007669"/>
    <property type="project" value="UniProtKB-UniRule"/>
</dbReference>
<dbReference type="GO" id="GO:0046429">
    <property type="term" value="F:4-hydroxy-3-methylbut-2-en-1-yl diphosphate synthase activity (ferredoxin)"/>
    <property type="evidence" value="ECO:0007669"/>
    <property type="project" value="UniProtKB-UniRule"/>
</dbReference>
<dbReference type="GO" id="GO:0141197">
    <property type="term" value="F:4-hydroxy-3-methylbut-2-enyl-diphosphate synthase activity (flavodoxin)"/>
    <property type="evidence" value="ECO:0007669"/>
    <property type="project" value="UniProtKB-EC"/>
</dbReference>
<dbReference type="GO" id="GO:0005506">
    <property type="term" value="F:iron ion binding"/>
    <property type="evidence" value="ECO:0007669"/>
    <property type="project" value="InterPro"/>
</dbReference>
<dbReference type="GO" id="GO:0019288">
    <property type="term" value="P:isopentenyl diphosphate biosynthetic process, methylerythritol 4-phosphate pathway"/>
    <property type="evidence" value="ECO:0007669"/>
    <property type="project" value="UniProtKB-UniRule"/>
</dbReference>
<dbReference type="GO" id="GO:0016114">
    <property type="term" value="P:terpenoid biosynthetic process"/>
    <property type="evidence" value="ECO:0007669"/>
    <property type="project" value="InterPro"/>
</dbReference>
<dbReference type="FunFam" id="3.20.20.20:FF:000001">
    <property type="entry name" value="4-hydroxy-3-methylbut-2-en-1-yl diphosphate synthase (flavodoxin)"/>
    <property type="match status" value="1"/>
</dbReference>
<dbReference type="FunFam" id="3.30.413.10:FF:000002">
    <property type="entry name" value="4-hydroxy-3-methylbut-2-en-1-yl diphosphate synthase (flavodoxin)"/>
    <property type="match status" value="1"/>
</dbReference>
<dbReference type="Gene3D" id="3.20.20.20">
    <property type="entry name" value="Dihydropteroate synthase-like"/>
    <property type="match status" value="1"/>
</dbReference>
<dbReference type="Gene3D" id="3.30.413.10">
    <property type="entry name" value="Sulfite Reductase Hemoprotein, domain 1"/>
    <property type="match status" value="1"/>
</dbReference>
<dbReference type="HAMAP" id="MF_00159">
    <property type="entry name" value="IspG"/>
    <property type="match status" value="1"/>
</dbReference>
<dbReference type="InterPro" id="IPR011005">
    <property type="entry name" value="Dihydropteroate_synth-like_sf"/>
</dbReference>
<dbReference type="InterPro" id="IPR016425">
    <property type="entry name" value="IspG_bac"/>
</dbReference>
<dbReference type="InterPro" id="IPR004588">
    <property type="entry name" value="IspG_bac-typ"/>
</dbReference>
<dbReference type="InterPro" id="IPR045854">
    <property type="entry name" value="NO2/SO3_Rdtase_4Fe4S_sf"/>
</dbReference>
<dbReference type="NCBIfam" id="TIGR00612">
    <property type="entry name" value="ispG_gcpE"/>
    <property type="match status" value="1"/>
</dbReference>
<dbReference type="NCBIfam" id="NF001540">
    <property type="entry name" value="PRK00366.1"/>
    <property type="match status" value="1"/>
</dbReference>
<dbReference type="PANTHER" id="PTHR30454">
    <property type="entry name" value="4-HYDROXY-3-METHYLBUT-2-EN-1-YL DIPHOSPHATE SYNTHASE"/>
    <property type="match status" value="1"/>
</dbReference>
<dbReference type="PANTHER" id="PTHR30454:SF0">
    <property type="entry name" value="4-HYDROXY-3-METHYLBUT-2-EN-1-YL DIPHOSPHATE SYNTHASE (FERREDOXIN), CHLOROPLASTIC"/>
    <property type="match status" value="1"/>
</dbReference>
<dbReference type="Pfam" id="PF04551">
    <property type="entry name" value="GcpE"/>
    <property type="match status" value="1"/>
</dbReference>
<dbReference type="PIRSF" id="PIRSF004640">
    <property type="entry name" value="IspG"/>
    <property type="match status" value="1"/>
</dbReference>
<dbReference type="SUPFAM" id="SSF51717">
    <property type="entry name" value="Dihydropteroate synthetase-like"/>
    <property type="match status" value="1"/>
</dbReference>
<dbReference type="SUPFAM" id="SSF56014">
    <property type="entry name" value="Nitrite and sulphite reductase 4Fe-4S domain-like"/>
    <property type="match status" value="1"/>
</dbReference>
<accession>B4EZT3</accession>
<reference key="1">
    <citation type="journal article" date="2008" name="J. Bacteriol.">
        <title>Complete genome sequence of uropathogenic Proteus mirabilis, a master of both adherence and motility.</title>
        <authorList>
            <person name="Pearson M.M."/>
            <person name="Sebaihia M."/>
            <person name="Churcher C."/>
            <person name="Quail M.A."/>
            <person name="Seshasayee A.S."/>
            <person name="Luscombe N.M."/>
            <person name="Abdellah Z."/>
            <person name="Arrosmith C."/>
            <person name="Atkin B."/>
            <person name="Chillingworth T."/>
            <person name="Hauser H."/>
            <person name="Jagels K."/>
            <person name="Moule S."/>
            <person name="Mungall K."/>
            <person name="Norbertczak H."/>
            <person name="Rabbinowitsch E."/>
            <person name="Walker D."/>
            <person name="Whithead S."/>
            <person name="Thomson N.R."/>
            <person name="Rather P.N."/>
            <person name="Parkhill J."/>
            <person name="Mobley H.L.T."/>
        </authorList>
    </citation>
    <scope>NUCLEOTIDE SEQUENCE [LARGE SCALE GENOMIC DNA]</scope>
    <source>
        <strain>HI4320</strain>
    </source>
</reference>
<protein>
    <recommendedName>
        <fullName evidence="1">4-hydroxy-3-methylbut-2-en-1-yl diphosphate synthase (flavodoxin)</fullName>
        <ecNumber evidence="1">1.17.7.3</ecNumber>
    </recommendedName>
    <alternativeName>
        <fullName evidence="1">1-hydroxy-2-methyl-2-(E)-butenyl 4-diphosphate synthase</fullName>
    </alternativeName>
</protein>
<gene>
    <name evidence="1" type="primary">ispG</name>
    <name type="ordered locus">PMI1845</name>
</gene>